<gene>
    <name evidence="1" type="primary">purT</name>
    <name type="ordered locus">BP0702</name>
</gene>
<organism>
    <name type="scientific">Bordetella pertussis (strain Tohama I / ATCC BAA-589 / NCTC 13251)</name>
    <dbReference type="NCBI Taxonomy" id="257313"/>
    <lineage>
        <taxon>Bacteria</taxon>
        <taxon>Pseudomonadati</taxon>
        <taxon>Pseudomonadota</taxon>
        <taxon>Betaproteobacteria</taxon>
        <taxon>Burkholderiales</taxon>
        <taxon>Alcaligenaceae</taxon>
        <taxon>Bordetella</taxon>
    </lineage>
</organism>
<comment type="function">
    <text evidence="1">Involved in the de novo purine biosynthesis. Catalyzes the transfer of formate to 5-phospho-ribosyl-glycinamide (GAR), producing 5-phospho-ribosyl-N-formylglycinamide (FGAR). Formate is provided by PurU via hydrolysis of 10-formyl-tetrahydrofolate.</text>
</comment>
<comment type="catalytic activity">
    <reaction evidence="1">
        <text>N(1)-(5-phospho-beta-D-ribosyl)glycinamide + formate + ATP = N(2)-formyl-N(1)-(5-phospho-beta-D-ribosyl)glycinamide + ADP + phosphate + H(+)</text>
        <dbReference type="Rhea" id="RHEA:24829"/>
        <dbReference type="ChEBI" id="CHEBI:15378"/>
        <dbReference type="ChEBI" id="CHEBI:15740"/>
        <dbReference type="ChEBI" id="CHEBI:30616"/>
        <dbReference type="ChEBI" id="CHEBI:43474"/>
        <dbReference type="ChEBI" id="CHEBI:143788"/>
        <dbReference type="ChEBI" id="CHEBI:147286"/>
        <dbReference type="ChEBI" id="CHEBI:456216"/>
        <dbReference type="EC" id="6.3.1.21"/>
    </reaction>
    <physiologicalReaction direction="left-to-right" evidence="1">
        <dbReference type="Rhea" id="RHEA:24830"/>
    </physiologicalReaction>
</comment>
<comment type="pathway">
    <text evidence="1">Purine metabolism; IMP biosynthesis via de novo pathway; N(2)-formyl-N(1)-(5-phospho-D-ribosyl)glycinamide from N(1)-(5-phospho-D-ribosyl)glycinamide (formate route): step 1/1.</text>
</comment>
<comment type="subunit">
    <text evidence="1">Homodimer.</text>
</comment>
<comment type="similarity">
    <text evidence="1">Belongs to the PurK/PurT family.</text>
</comment>
<sequence>MSTFPAPVLGTPLSPTATRVMLLGAGELGKEVVIALQRLGVEVIAVDRYADAPGHQVAHRAHVVSMTDPQALRQVIEQERPHVVVPEIEAIATDLLVALEDEGAVHVTPTARAAHLTMNREGIRRLAAETLGLPTSPYRFVDTEQALREAIDGGIGYPCVIKPVMSSSGKGQSIIRSADDIAAAWRYAQEGGRVGAGRVIVEGFIEFDYEITLLTVRARGADGQIVTQFCEPIGHRQVDGDYVESWQPHPMSPVALQRSREIALAVTGDLGGLGIFGVELFVAGDQVWFSEVSPRPHDTGMVTLISQVQNEFELHARALLGLPVDTRLRQPGASSVIYGGVDARGVAFEGVAQALAEPGTDIRLFGKPESYAKRRMGVGLAVADDVDQARAKAARVSQAVRVRA</sequence>
<evidence type="ECO:0000255" key="1">
    <source>
        <dbReference type="HAMAP-Rule" id="MF_01643"/>
    </source>
</evidence>
<reference key="1">
    <citation type="journal article" date="2003" name="Nat. Genet.">
        <title>Comparative analysis of the genome sequences of Bordetella pertussis, Bordetella parapertussis and Bordetella bronchiseptica.</title>
        <authorList>
            <person name="Parkhill J."/>
            <person name="Sebaihia M."/>
            <person name="Preston A."/>
            <person name="Murphy L.D."/>
            <person name="Thomson N.R."/>
            <person name="Harris D.E."/>
            <person name="Holden M.T.G."/>
            <person name="Churcher C.M."/>
            <person name="Bentley S.D."/>
            <person name="Mungall K.L."/>
            <person name="Cerdeno-Tarraga A.-M."/>
            <person name="Temple L."/>
            <person name="James K.D."/>
            <person name="Harris B."/>
            <person name="Quail M.A."/>
            <person name="Achtman M."/>
            <person name="Atkin R."/>
            <person name="Baker S."/>
            <person name="Basham D."/>
            <person name="Bason N."/>
            <person name="Cherevach I."/>
            <person name="Chillingworth T."/>
            <person name="Collins M."/>
            <person name="Cronin A."/>
            <person name="Davis P."/>
            <person name="Doggett J."/>
            <person name="Feltwell T."/>
            <person name="Goble A."/>
            <person name="Hamlin N."/>
            <person name="Hauser H."/>
            <person name="Holroyd S."/>
            <person name="Jagels K."/>
            <person name="Leather S."/>
            <person name="Moule S."/>
            <person name="Norberczak H."/>
            <person name="O'Neil S."/>
            <person name="Ormond D."/>
            <person name="Price C."/>
            <person name="Rabbinowitsch E."/>
            <person name="Rutter S."/>
            <person name="Sanders M."/>
            <person name="Saunders D."/>
            <person name="Seeger K."/>
            <person name="Sharp S."/>
            <person name="Simmonds M."/>
            <person name="Skelton J."/>
            <person name="Squares R."/>
            <person name="Squares S."/>
            <person name="Stevens K."/>
            <person name="Unwin L."/>
            <person name="Whitehead S."/>
            <person name="Barrell B.G."/>
            <person name="Maskell D.J."/>
        </authorList>
    </citation>
    <scope>NUCLEOTIDE SEQUENCE [LARGE SCALE GENOMIC DNA]</scope>
    <source>
        <strain>Tohama I / ATCC BAA-589 / NCTC 13251</strain>
    </source>
</reference>
<dbReference type="EC" id="6.3.1.21" evidence="1"/>
<dbReference type="EMBL" id="BX640413">
    <property type="protein sequence ID" value="CAE41012.1"/>
    <property type="molecule type" value="Genomic_DNA"/>
</dbReference>
<dbReference type="RefSeq" id="NP_879534.1">
    <property type="nucleotide sequence ID" value="NC_002929.2"/>
</dbReference>
<dbReference type="RefSeq" id="WP_010929968.1">
    <property type="nucleotide sequence ID" value="NZ_CP039022.1"/>
</dbReference>
<dbReference type="SMR" id="Q7W006"/>
<dbReference type="STRING" id="257313.BP0702"/>
<dbReference type="PaxDb" id="257313-BP0702"/>
<dbReference type="GeneID" id="69603263"/>
<dbReference type="KEGG" id="bpe:BP0702"/>
<dbReference type="PATRIC" id="fig|257313.5.peg.751"/>
<dbReference type="eggNOG" id="COG0027">
    <property type="taxonomic scope" value="Bacteria"/>
</dbReference>
<dbReference type="HOGENOM" id="CLU_011534_1_3_4"/>
<dbReference type="UniPathway" id="UPA00074">
    <property type="reaction ID" value="UER00127"/>
</dbReference>
<dbReference type="Proteomes" id="UP000002676">
    <property type="component" value="Chromosome"/>
</dbReference>
<dbReference type="GO" id="GO:0005829">
    <property type="term" value="C:cytosol"/>
    <property type="evidence" value="ECO:0007669"/>
    <property type="project" value="TreeGrafter"/>
</dbReference>
<dbReference type="GO" id="GO:0005524">
    <property type="term" value="F:ATP binding"/>
    <property type="evidence" value="ECO:0007669"/>
    <property type="project" value="UniProtKB-UniRule"/>
</dbReference>
<dbReference type="GO" id="GO:0000287">
    <property type="term" value="F:magnesium ion binding"/>
    <property type="evidence" value="ECO:0007669"/>
    <property type="project" value="InterPro"/>
</dbReference>
<dbReference type="GO" id="GO:0043815">
    <property type="term" value="F:phosphoribosylglycinamide formyltransferase 2 activity"/>
    <property type="evidence" value="ECO:0007669"/>
    <property type="project" value="UniProtKB-UniRule"/>
</dbReference>
<dbReference type="GO" id="GO:0004644">
    <property type="term" value="F:phosphoribosylglycinamide formyltransferase activity"/>
    <property type="evidence" value="ECO:0007669"/>
    <property type="project" value="InterPro"/>
</dbReference>
<dbReference type="GO" id="GO:0006189">
    <property type="term" value="P:'de novo' IMP biosynthetic process"/>
    <property type="evidence" value="ECO:0007669"/>
    <property type="project" value="UniProtKB-UniRule"/>
</dbReference>
<dbReference type="FunFam" id="3.30.1490.20:FF:000013">
    <property type="entry name" value="Formate-dependent phosphoribosylglycinamide formyltransferase"/>
    <property type="match status" value="1"/>
</dbReference>
<dbReference type="FunFam" id="3.40.50.20:FF:000007">
    <property type="entry name" value="Formate-dependent phosphoribosylglycinamide formyltransferase"/>
    <property type="match status" value="1"/>
</dbReference>
<dbReference type="Gene3D" id="3.40.50.20">
    <property type="match status" value="1"/>
</dbReference>
<dbReference type="Gene3D" id="3.30.1490.20">
    <property type="entry name" value="ATP-grasp fold, A domain"/>
    <property type="match status" value="1"/>
</dbReference>
<dbReference type="Gene3D" id="3.30.470.20">
    <property type="entry name" value="ATP-grasp fold, B domain"/>
    <property type="match status" value="1"/>
</dbReference>
<dbReference type="HAMAP" id="MF_01643">
    <property type="entry name" value="PurT"/>
    <property type="match status" value="1"/>
</dbReference>
<dbReference type="InterPro" id="IPR011761">
    <property type="entry name" value="ATP-grasp"/>
</dbReference>
<dbReference type="InterPro" id="IPR003135">
    <property type="entry name" value="ATP-grasp_carboxylate-amine"/>
</dbReference>
<dbReference type="InterPro" id="IPR013815">
    <property type="entry name" value="ATP_grasp_subdomain_1"/>
</dbReference>
<dbReference type="InterPro" id="IPR016185">
    <property type="entry name" value="PreATP-grasp_dom_sf"/>
</dbReference>
<dbReference type="InterPro" id="IPR005862">
    <property type="entry name" value="PurT"/>
</dbReference>
<dbReference type="InterPro" id="IPR054350">
    <property type="entry name" value="PurT/PurK_preATP-grasp"/>
</dbReference>
<dbReference type="InterPro" id="IPR048740">
    <property type="entry name" value="PurT_C"/>
</dbReference>
<dbReference type="InterPro" id="IPR011054">
    <property type="entry name" value="Rudment_hybrid_motif"/>
</dbReference>
<dbReference type="NCBIfam" id="NF006766">
    <property type="entry name" value="PRK09288.1"/>
    <property type="match status" value="1"/>
</dbReference>
<dbReference type="NCBIfam" id="TIGR01142">
    <property type="entry name" value="purT"/>
    <property type="match status" value="1"/>
</dbReference>
<dbReference type="PANTHER" id="PTHR43055">
    <property type="entry name" value="FORMATE-DEPENDENT PHOSPHORIBOSYLGLYCINAMIDE FORMYLTRANSFERASE"/>
    <property type="match status" value="1"/>
</dbReference>
<dbReference type="PANTHER" id="PTHR43055:SF1">
    <property type="entry name" value="FORMATE-DEPENDENT PHOSPHORIBOSYLGLYCINAMIDE FORMYLTRANSFERASE"/>
    <property type="match status" value="1"/>
</dbReference>
<dbReference type="Pfam" id="PF02222">
    <property type="entry name" value="ATP-grasp"/>
    <property type="match status" value="1"/>
</dbReference>
<dbReference type="Pfam" id="PF21244">
    <property type="entry name" value="PurT_C"/>
    <property type="match status" value="1"/>
</dbReference>
<dbReference type="Pfam" id="PF22660">
    <property type="entry name" value="RS_preATP-grasp-like"/>
    <property type="match status" value="1"/>
</dbReference>
<dbReference type="SUPFAM" id="SSF56059">
    <property type="entry name" value="Glutathione synthetase ATP-binding domain-like"/>
    <property type="match status" value="1"/>
</dbReference>
<dbReference type="SUPFAM" id="SSF52440">
    <property type="entry name" value="PreATP-grasp domain"/>
    <property type="match status" value="1"/>
</dbReference>
<dbReference type="SUPFAM" id="SSF51246">
    <property type="entry name" value="Rudiment single hybrid motif"/>
    <property type="match status" value="1"/>
</dbReference>
<dbReference type="PROSITE" id="PS50975">
    <property type="entry name" value="ATP_GRASP"/>
    <property type="match status" value="1"/>
</dbReference>
<accession>Q7W006</accession>
<feature type="chain" id="PRO_0000319133" description="Formate-dependent phosphoribosylglycinamide formyltransferase">
    <location>
        <begin position="1"/>
        <end position="404"/>
    </location>
</feature>
<feature type="domain" description="ATP-grasp" evidence="1">
    <location>
        <begin position="125"/>
        <end position="320"/>
    </location>
</feature>
<feature type="binding site" evidence="1">
    <location>
        <begin position="27"/>
        <end position="28"/>
    </location>
    <ligand>
        <name>N(1)-(5-phospho-beta-D-ribosyl)glycinamide</name>
        <dbReference type="ChEBI" id="CHEBI:143788"/>
    </ligand>
</feature>
<feature type="binding site" evidence="1">
    <location>
        <position position="87"/>
    </location>
    <ligand>
        <name>N(1)-(5-phospho-beta-D-ribosyl)glycinamide</name>
        <dbReference type="ChEBI" id="CHEBI:143788"/>
    </ligand>
</feature>
<feature type="binding site" evidence="1">
    <location>
        <position position="120"/>
    </location>
    <ligand>
        <name>ATP</name>
        <dbReference type="ChEBI" id="CHEBI:30616"/>
    </ligand>
</feature>
<feature type="binding site" evidence="1">
    <location>
        <position position="162"/>
    </location>
    <ligand>
        <name>ATP</name>
        <dbReference type="ChEBI" id="CHEBI:30616"/>
    </ligand>
</feature>
<feature type="binding site" evidence="1">
    <location>
        <begin position="167"/>
        <end position="172"/>
    </location>
    <ligand>
        <name>ATP</name>
        <dbReference type="ChEBI" id="CHEBI:30616"/>
    </ligand>
</feature>
<feature type="binding site" evidence="1">
    <location>
        <begin position="202"/>
        <end position="205"/>
    </location>
    <ligand>
        <name>ATP</name>
        <dbReference type="ChEBI" id="CHEBI:30616"/>
    </ligand>
</feature>
<feature type="binding site" evidence="1">
    <location>
        <position position="210"/>
    </location>
    <ligand>
        <name>ATP</name>
        <dbReference type="ChEBI" id="CHEBI:30616"/>
    </ligand>
</feature>
<feature type="binding site" evidence="1">
    <location>
        <position position="279"/>
    </location>
    <ligand>
        <name>Mg(2+)</name>
        <dbReference type="ChEBI" id="CHEBI:18420"/>
    </ligand>
</feature>
<feature type="binding site" evidence="1">
    <location>
        <position position="291"/>
    </location>
    <ligand>
        <name>Mg(2+)</name>
        <dbReference type="ChEBI" id="CHEBI:18420"/>
    </ligand>
</feature>
<feature type="binding site" evidence="1">
    <location>
        <position position="298"/>
    </location>
    <ligand>
        <name>N(1)-(5-phospho-beta-D-ribosyl)glycinamide</name>
        <dbReference type="ChEBI" id="CHEBI:143788"/>
    </ligand>
</feature>
<feature type="binding site" evidence="1">
    <location>
        <position position="367"/>
    </location>
    <ligand>
        <name>N(1)-(5-phospho-beta-D-ribosyl)glycinamide</name>
        <dbReference type="ChEBI" id="CHEBI:143788"/>
    </ligand>
</feature>
<feature type="binding site" evidence="1">
    <location>
        <begin position="374"/>
        <end position="375"/>
    </location>
    <ligand>
        <name>N(1)-(5-phospho-beta-D-ribosyl)glycinamide</name>
        <dbReference type="ChEBI" id="CHEBI:143788"/>
    </ligand>
</feature>
<proteinExistence type="inferred from homology"/>
<protein>
    <recommendedName>
        <fullName evidence="1">Formate-dependent phosphoribosylglycinamide formyltransferase</fullName>
        <ecNumber evidence="1">6.3.1.21</ecNumber>
    </recommendedName>
    <alternativeName>
        <fullName evidence="1">5'-phosphoribosylglycinamide transformylase 2</fullName>
    </alternativeName>
    <alternativeName>
        <fullName evidence="1">Formate-dependent GAR transformylase</fullName>
    </alternativeName>
    <alternativeName>
        <fullName evidence="1">GAR transformylase 2</fullName>
        <shortName evidence="1">GART 2</shortName>
    </alternativeName>
    <alternativeName>
        <fullName evidence="1">Non-folate glycinamide ribonucleotide transformylase</fullName>
    </alternativeName>
    <alternativeName>
        <fullName evidence="1">Phosphoribosylglycinamide formyltransferase 2</fullName>
    </alternativeName>
</protein>
<name>PURT_BORPE</name>
<keyword id="KW-0067">ATP-binding</keyword>
<keyword id="KW-0436">Ligase</keyword>
<keyword id="KW-0460">Magnesium</keyword>
<keyword id="KW-0479">Metal-binding</keyword>
<keyword id="KW-0547">Nucleotide-binding</keyword>
<keyword id="KW-0658">Purine biosynthesis</keyword>
<keyword id="KW-1185">Reference proteome</keyword>